<accession>P0A6A3</accession>
<accession>P15046</accession>
<accession>P78188</accession>
<accession>Q59386</accession>
<comment type="function">
    <text evidence="2">Catalyzes the formation of acetyl phosphate from acetate and ATP. Can also catalyze the reverse reaction. During anaerobic growth of the organism, this enzyme is also involved in the synthesis of most of the ATP formed catabolically. The main pathway for acetate production during exponential phase (PubMed:16080684).</text>
</comment>
<comment type="catalytic activity">
    <reaction evidence="1">
        <text>acetate + ATP = acetyl phosphate + ADP</text>
        <dbReference type="Rhea" id="RHEA:11352"/>
        <dbReference type="ChEBI" id="CHEBI:22191"/>
        <dbReference type="ChEBI" id="CHEBI:30089"/>
        <dbReference type="ChEBI" id="CHEBI:30616"/>
        <dbReference type="ChEBI" id="CHEBI:456216"/>
        <dbReference type="EC" id="2.7.2.1"/>
    </reaction>
</comment>
<comment type="cofactor">
    <cofactor evidence="1">
        <name>Mg(2+)</name>
        <dbReference type="ChEBI" id="CHEBI:18420"/>
    </cofactor>
    <cofactor evidence="1">
        <name>Mn(2+)</name>
        <dbReference type="ChEBI" id="CHEBI:29035"/>
    </cofactor>
    <text evidence="1">Mg(2+). Can also accept Mn(2+).</text>
</comment>
<comment type="pathway">
    <text evidence="1">Metabolic intermediate biosynthesis; acetyl-CoA biosynthesis; acetyl-CoA from acetate: step 1/2.</text>
</comment>
<comment type="subunit">
    <text>Homodimer.</text>
</comment>
<comment type="subcellular location">
    <subcellularLocation>
        <location>Cytoplasm</location>
    </subcellularLocation>
</comment>
<comment type="induction">
    <text evidence="2">Expressed during exponential phase, decreases as cells enter stationary phase at pH 7.0. Expression is inhibited at pH 6.0. Part of the ackA-pta operon.</text>
</comment>
<comment type="disruption phenotype">
    <text evidence="2">Not essential it can be deleted.</text>
</comment>
<comment type="similarity">
    <text evidence="1">Belongs to the acetokinase family.</text>
</comment>
<protein>
    <recommendedName>
        <fullName evidence="1">Acetate kinase</fullName>
        <ecNumber evidence="1">2.7.2.1</ecNumber>
    </recommendedName>
    <alternativeName>
        <fullName evidence="1">Acetokinase</fullName>
    </alternativeName>
</protein>
<dbReference type="EC" id="2.7.2.1" evidence="1"/>
<dbReference type="EMBL" id="M22956">
    <property type="protein sequence ID" value="AAA23406.1"/>
    <property type="molecule type" value="Genomic_DNA"/>
</dbReference>
<dbReference type="EMBL" id="D17576">
    <property type="protein sequence ID" value="BAA04501.1"/>
    <property type="molecule type" value="Genomic_DNA"/>
</dbReference>
<dbReference type="EMBL" id="U00096">
    <property type="protein sequence ID" value="AAC75356.1"/>
    <property type="molecule type" value="Genomic_DNA"/>
</dbReference>
<dbReference type="EMBL" id="AP009048">
    <property type="protein sequence ID" value="BAA16135.1"/>
    <property type="molecule type" value="Genomic_DNA"/>
</dbReference>
<dbReference type="PIR" id="JT0498">
    <property type="entry name" value="KIECAA"/>
</dbReference>
<dbReference type="RefSeq" id="NP_416799.1">
    <property type="nucleotide sequence ID" value="NC_000913.3"/>
</dbReference>
<dbReference type="RefSeq" id="WP_000095707.1">
    <property type="nucleotide sequence ID" value="NZ_STEB01000008.1"/>
</dbReference>
<dbReference type="SMR" id="P0A6A3"/>
<dbReference type="BioGRID" id="4261690">
    <property type="interactions" value="467"/>
</dbReference>
<dbReference type="DIP" id="DIP-9042N"/>
<dbReference type="FunCoup" id="P0A6A3">
    <property type="interactions" value="552"/>
</dbReference>
<dbReference type="IntAct" id="P0A6A3">
    <property type="interactions" value="12"/>
</dbReference>
<dbReference type="STRING" id="511145.b2296"/>
<dbReference type="jPOST" id="P0A6A3"/>
<dbReference type="PaxDb" id="511145-b2296"/>
<dbReference type="EnsemblBacteria" id="AAC75356">
    <property type="protein sequence ID" value="AAC75356"/>
    <property type="gene ID" value="b2296"/>
</dbReference>
<dbReference type="GeneID" id="93774878"/>
<dbReference type="GeneID" id="946775"/>
<dbReference type="KEGG" id="ecj:JW2293"/>
<dbReference type="KEGG" id="eco:b2296"/>
<dbReference type="KEGG" id="ecoc:C3026_12810"/>
<dbReference type="PATRIC" id="fig|1411691.4.peg.4438"/>
<dbReference type="EchoBASE" id="EB0026"/>
<dbReference type="eggNOG" id="COG0282">
    <property type="taxonomic scope" value="Bacteria"/>
</dbReference>
<dbReference type="HOGENOM" id="CLU_020352_0_0_6"/>
<dbReference type="InParanoid" id="P0A6A3"/>
<dbReference type="OMA" id="HKYVSQR"/>
<dbReference type="OrthoDB" id="9802453at2"/>
<dbReference type="PhylomeDB" id="P0A6A3"/>
<dbReference type="BioCyc" id="EcoCyc:ACETATEKINA-MONOMER"/>
<dbReference type="BioCyc" id="MetaCyc:ACETATEKINA-MONOMER"/>
<dbReference type="BRENDA" id="2.7.2.1">
    <property type="organism ID" value="2026"/>
</dbReference>
<dbReference type="SABIO-RK" id="P0A6A3"/>
<dbReference type="UniPathway" id="UPA00340">
    <property type="reaction ID" value="UER00458"/>
</dbReference>
<dbReference type="PRO" id="PR:P0A6A3"/>
<dbReference type="Proteomes" id="UP000000625">
    <property type="component" value="Chromosome"/>
</dbReference>
<dbReference type="GO" id="GO:0005829">
    <property type="term" value="C:cytosol"/>
    <property type="evidence" value="ECO:0000314"/>
    <property type="project" value="EcoCyc"/>
</dbReference>
<dbReference type="GO" id="GO:0016020">
    <property type="term" value="C:membrane"/>
    <property type="evidence" value="ECO:0007005"/>
    <property type="project" value="UniProtKB"/>
</dbReference>
<dbReference type="GO" id="GO:0008776">
    <property type="term" value="F:acetate kinase activity"/>
    <property type="evidence" value="ECO:0000314"/>
    <property type="project" value="EcoliWiki"/>
</dbReference>
<dbReference type="GO" id="GO:0005524">
    <property type="term" value="F:ATP binding"/>
    <property type="evidence" value="ECO:0007669"/>
    <property type="project" value="UniProtKB-KW"/>
</dbReference>
<dbReference type="GO" id="GO:0000287">
    <property type="term" value="F:magnesium ion binding"/>
    <property type="evidence" value="ECO:0007669"/>
    <property type="project" value="UniProtKB-UniRule"/>
</dbReference>
<dbReference type="GO" id="GO:0008270">
    <property type="term" value="F:zinc ion binding"/>
    <property type="evidence" value="ECO:0000314"/>
    <property type="project" value="EcoliWiki"/>
</dbReference>
<dbReference type="GO" id="GO:0019413">
    <property type="term" value="P:acetate biosynthetic process"/>
    <property type="evidence" value="ECO:0000316"/>
    <property type="project" value="EcoliWiki"/>
</dbReference>
<dbReference type="GO" id="GO:0006083">
    <property type="term" value="P:acetate metabolic process"/>
    <property type="evidence" value="ECO:0000315"/>
    <property type="project" value="CACAO"/>
</dbReference>
<dbReference type="GO" id="GO:0006085">
    <property type="term" value="P:acetyl-CoA biosynthetic process"/>
    <property type="evidence" value="ECO:0007669"/>
    <property type="project" value="UniProtKB-UniRule"/>
</dbReference>
<dbReference type="GO" id="GO:0019542">
    <property type="term" value="P:propionate biosynthetic process"/>
    <property type="evidence" value="ECO:0000316"/>
    <property type="project" value="EcoliWiki"/>
</dbReference>
<dbReference type="GO" id="GO:0044011">
    <property type="term" value="P:single-species biofilm formation on inanimate substrate"/>
    <property type="evidence" value="ECO:0000315"/>
    <property type="project" value="CACAO"/>
</dbReference>
<dbReference type="CDD" id="cd24010">
    <property type="entry name" value="ASKHA_NBD_AcK_PK"/>
    <property type="match status" value="1"/>
</dbReference>
<dbReference type="FunFam" id="3.30.420.40:FF:000041">
    <property type="entry name" value="Acetate kinase"/>
    <property type="match status" value="1"/>
</dbReference>
<dbReference type="FunFam" id="3.30.420.40:FF:000042">
    <property type="entry name" value="Acetate kinase"/>
    <property type="match status" value="1"/>
</dbReference>
<dbReference type="Gene3D" id="3.30.420.40">
    <property type="match status" value="2"/>
</dbReference>
<dbReference type="HAMAP" id="MF_00020">
    <property type="entry name" value="Acetate_kinase"/>
    <property type="match status" value="1"/>
</dbReference>
<dbReference type="InterPro" id="IPR004372">
    <property type="entry name" value="Ac/propionate_kinase"/>
</dbReference>
<dbReference type="InterPro" id="IPR000890">
    <property type="entry name" value="Aliphatic_acid_kin_short-chain"/>
</dbReference>
<dbReference type="InterPro" id="IPR023865">
    <property type="entry name" value="Aliphatic_acid_kinase_CS"/>
</dbReference>
<dbReference type="InterPro" id="IPR043129">
    <property type="entry name" value="ATPase_NBD"/>
</dbReference>
<dbReference type="NCBIfam" id="TIGR00016">
    <property type="entry name" value="ackA"/>
    <property type="match status" value="1"/>
</dbReference>
<dbReference type="PANTHER" id="PTHR21060">
    <property type="entry name" value="ACETATE KINASE"/>
    <property type="match status" value="1"/>
</dbReference>
<dbReference type="PANTHER" id="PTHR21060:SF21">
    <property type="entry name" value="ACETATE KINASE"/>
    <property type="match status" value="1"/>
</dbReference>
<dbReference type="Pfam" id="PF00871">
    <property type="entry name" value="Acetate_kinase"/>
    <property type="match status" value="1"/>
</dbReference>
<dbReference type="PIRSF" id="PIRSF000722">
    <property type="entry name" value="Acetate_prop_kin"/>
    <property type="match status" value="1"/>
</dbReference>
<dbReference type="PRINTS" id="PR00471">
    <property type="entry name" value="ACETATEKNASE"/>
</dbReference>
<dbReference type="SUPFAM" id="SSF53067">
    <property type="entry name" value="Actin-like ATPase domain"/>
    <property type="match status" value="2"/>
</dbReference>
<dbReference type="PROSITE" id="PS01075">
    <property type="entry name" value="ACETATE_KINASE_1"/>
    <property type="match status" value="1"/>
</dbReference>
<dbReference type="PROSITE" id="PS01076">
    <property type="entry name" value="ACETATE_KINASE_2"/>
    <property type="match status" value="1"/>
</dbReference>
<reference key="1">
    <citation type="journal article" date="1989" name="J. Bacteriol.">
        <title>Cloning, expression, and nucleotide sequence of the Escherichia coli K-12 ackA gene.</title>
        <authorList>
            <person name="Matsuyama A."/>
            <person name="Yamamoto H."/>
            <person name="Nakano E."/>
        </authorList>
    </citation>
    <scope>NUCLEOTIDE SEQUENCE [GENOMIC DNA]</scope>
    <scope>PARTIAL PROTEIN SEQUENCE</scope>
    <source>
        <strain>K12</strain>
    </source>
</reference>
<reference key="2">
    <citation type="journal article" date="1994" name="J. Biochem.">
        <title>Identification and characterization of the ackA (acetate kinase A)-pta (phosphotransacetylase) operon and complementation analysis of acetate utilization by an ackA-pta deletion mutant of Escherichia coli.</title>
        <authorList>
            <person name="Kakuda H."/>
            <person name="Hosono K."/>
            <person name="Shiroishi K."/>
            <person name="Ichihara S."/>
        </authorList>
    </citation>
    <scope>NUCLEOTIDE SEQUENCE [GENOMIC DNA]</scope>
    <source>
        <strain>K12 / KH131</strain>
    </source>
</reference>
<reference key="3">
    <citation type="journal article" date="1997" name="DNA Res.">
        <title>Construction of a contiguous 874-kb sequence of the Escherichia coli-K12 genome corresponding to 50.0-68.8 min on the linkage map and analysis of its sequence features.</title>
        <authorList>
            <person name="Yamamoto Y."/>
            <person name="Aiba H."/>
            <person name="Baba T."/>
            <person name="Hayashi K."/>
            <person name="Inada T."/>
            <person name="Isono K."/>
            <person name="Itoh T."/>
            <person name="Kimura S."/>
            <person name="Kitagawa M."/>
            <person name="Makino K."/>
            <person name="Miki T."/>
            <person name="Mitsuhashi N."/>
            <person name="Mizobuchi K."/>
            <person name="Mori H."/>
            <person name="Nakade S."/>
            <person name="Nakamura Y."/>
            <person name="Nashimoto H."/>
            <person name="Oshima T."/>
            <person name="Oyama S."/>
            <person name="Saito N."/>
            <person name="Sampei G."/>
            <person name="Satoh Y."/>
            <person name="Sivasundaram S."/>
            <person name="Tagami H."/>
            <person name="Takahashi H."/>
            <person name="Takeda J."/>
            <person name="Takemoto K."/>
            <person name="Uehara K."/>
            <person name="Wada C."/>
            <person name="Yamagata S."/>
            <person name="Horiuchi T."/>
        </authorList>
    </citation>
    <scope>NUCLEOTIDE SEQUENCE [LARGE SCALE GENOMIC DNA]</scope>
    <source>
        <strain>K12 / W3110 / ATCC 27325 / DSM 5911</strain>
    </source>
</reference>
<reference key="4">
    <citation type="journal article" date="1997" name="Science">
        <title>The complete genome sequence of Escherichia coli K-12.</title>
        <authorList>
            <person name="Blattner F.R."/>
            <person name="Plunkett G. III"/>
            <person name="Bloch C.A."/>
            <person name="Perna N.T."/>
            <person name="Burland V."/>
            <person name="Riley M."/>
            <person name="Collado-Vides J."/>
            <person name="Glasner J.D."/>
            <person name="Rode C.K."/>
            <person name="Mayhew G.F."/>
            <person name="Gregor J."/>
            <person name="Davis N.W."/>
            <person name="Kirkpatrick H.A."/>
            <person name="Goeden M.A."/>
            <person name="Rose D.J."/>
            <person name="Mau B."/>
            <person name="Shao Y."/>
        </authorList>
    </citation>
    <scope>NUCLEOTIDE SEQUENCE [LARGE SCALE GENOMIC DNA]</scope>
    <source>
        <strain>K12 / MG1655 / ATCC 47076</strain>
    </source>
</reference>
<reference key="5">
    <citation type="journal article" date="2006" name="Mol. Syst. Biol.">
        <title>Highly accurate genome sequences of Escherichia coli K-12 strains MG1655 and W3110.</title>
        <authorList>
            <person name="Hayashi K."/>
            <person name="Morooka N."/>
            <person name="Yamamoto Y."/>
            <person name="Fujita K."/>
            <person name="Isono K."/>
            <person name="Choi S."/>
            <person name="Ohtsubo E."/>
            <person name="Baba T."/>
            <person name="Wanner B.L."/>
            <person name="Mori H."/>
            <person name="Horiuchi T."/>
        </authorList>
    </citation>
    <scope>NUCLEOTIDE SEQUENCE [LARGE SCALE GENOMIC DNA]</scope>
    <source>
        <strain>K12 / W3110 / ATCC 27325 / DSM 5911</strain>
    </source>
</reference>
<reference key="6">
    <citation type="journal article" date="1997" name="Electrophoresis">
        <title>Escherichia coli proteome analysis using the gene-protein database.</title>
        <authorList>
            <person name="VanBogelen R.A."/>
            <person name="Abshire K.Z."/>
            <person name="Moldover B."/>
            <person name="Olson E.R."/>
            <person name="Neidhardt F.C."/>
        </authorList>
    </citation>
    <scope>IDENTIFICATION BY 2D-GEL</scope>
</reference>
<reference key="7">
    <citation type="journal article" date="2005" name="Biotechnol. Prog.">
        <title>Characterization of the acetate-producing pathways in Escherichia coli.</title>
        <authorList>
            <person name="Dittrich C.R."/>
            <person name="Bennett G.N."/>
            <person name="San K.Y."/>
        </authorList>
    </citation>
    <scope>FUNCTION</scope>
    <scope>INDUCTION</scope>
    <scope>DISRUPTION PHENOTYPE</scope>
    <source>
        <strain>K12 / MG1655 / ATCC 47076</strain>
    </source>
</reference>
<sequence length="400" mass="43290">MSSKLVLVLNCGSSSLKFAIIDAVNGEEYLSGLAECFHLPEARIKWKMDGNKQEAALGAGAAHSEALNFIVNTILAQKPELSAQLTAIGHRIVHGGEKYTSSVVIDESVIQGIKDAASFAPLHNPAHLIGIEEALKSFPQLKDKNVAVFDTAFHQTMPEESYLYALPYNLYKEHGIRRYGAHGTSHFYVTQEAAKMLNKPVEELNIITCHLGNGGSVSAIRNGKCVDTSMGLTPLEGLVMGTRSGDIDPAIIFHLHDTLGMSVDAINKLLTKESGLLGLTEVTSDCRYVEDNYATKEDAKRAMDVYCHRLAKYIGAYTALMDGRLDAVVFTGGIGENAAMVRELSLGKLGVLGFEVDHERNLAARFGKSGFINKEGTRPAVVIPTNEELVIAQDASRLTA</sequence>
<evidence type="ECO:0000255" key="1">
    <source>
        <dbReference type="HAMAP-Rule" id="MF_00020"/>
    </source>
</evidence>
<evidence type="ECO:0000269" key="2">
    <source>
    </source>
</evidence>
<evidence type="ECO:0000305" key="3"/>
<feature type="chain" id="PRO_0000107557" description="Acetate kinase">
    <location>
        <begin position="1"/>
        <end position="400"/>
    </location>
</feature>
<feature type="active site" description="Proton donor/acceptor" evidence="1">
    <location>
        <position position="150"/>
    </location>
</feature>
<feature type="binding site" evidence="1">
    <location>
        <position position="10"/>
    </location>
    <ligand>
        <name>Mg(2+)</name>
        <dbReference type="ChEBI" id="CHEBI:18420"/>
    </ligand>
</feature>
<feature type="binding site" evidence="1">
    <location>
        <position position="17"/>
    </location>
    <ligand>
        <name>ATP</name>
        <dbReference type="ChEBI" id="CHEBI:30616"/>
    </ligand>
</feature>
<feature type="binding site" evidence="1">
    <location>
        <position position="91"/>
    </location>
    <ligand>
        <name>substrate</name>
    </ligand>
</feature>
<feature type="binding site" evidence="1">
    <location>
        <begin position="210"/>
        <end position="214"/>
    </location>
    <ligand>
        <name>ATP</name>
        <dbReference type="ChEBI" id="CHEBI:30616"/>
    </ligand>
</feature>
<feature type="binding site" evidence="1">
    <location>
        <begin position="285"/>
        <end position="287"/>
    </location>
    <ligand>
        <name>ATP</name>
        <dbReference type="ChEBI" id="CHEBI:30616"/>
    </ligand>
</feature>
<feature type="binding site" evidence="1">
    <location>
        <begin position="333"/>
        <end position="337"/>
    </location>
    <ligand>
        <name>ATP</name>
        <dbReference type="ChEBI" id="CHEBI:30616"/>
    </ligand>
</feature>
<feature type="binding site" evidence="1">
    <location>
        <position position="387"/>
    </location>
    <ligand>
        <name>Mg(2+)</name>
        <dbReference type="ChEBI" id="CHEBI:18420"/>
    </ligand>
</feature>
<feature type="site" description="Transition state stabilizer" evidence="1">
    <location>
        <position position="182"/>
    </location>
</feature>
<feature type="site" description="Transition state stabilizer" evidence="1">
    <location>
        <position position="243"/>
    </location>
</feature>
<feature type="sequence conflict" description="In Ref. 2; BAA04501." evidence="3" ref="2">
    <original>R</original>
    <variation>G</variation>
    <location>
        <position position="221"/>
    </location>
</feature>
<feature type="sequence conflict" description="In Ref. 2; BAA04501." evidence="3" ref="2">
    <original>M</original>
    <variation>I</variation>
    <location>
        <position position="240"/>
    </location>
</feature>
<keyword id="KW-0067">ATP-binding</keyword>
<keyword id="KW-0963">Cytoplasm</keyword>
<keyword id="KW-0903">Direct protein sequencing</keyword>
<keyword id="KW-0418">Kinase</keyword>
<keyword id="KW-0460">Magnesium</keyword>
<keyword id="KW-0479">Metal-binding</keyword>
<keyword id="KW-0547">Nucleotide-binding</keyword>
<keyword id="KW-1185">Reference proteome</keyword>
<keyword id="KW-0808">Transferase</keyword>
<gene>
    <name evidence="1" type="primary">ackA</name>
    <name type="synonym">ack</name>
    <name type="ordered locus">b2296</name>
    <name type="ordered locus">JW2293</name>
</gene>
<organism>
    <name type="scientific">Escherichia coli (strain K12)</name>
    <dbReference type="NCBI Taxonomy" id="83333"/>
    <lineage>
        <taxon>Bacteria</taxon>
        <taxon>Pseudomonadati</taxon>
        <taxon>Pseudomonadota</taxon>
        <taxon>Gammaproteobacteria</taxon>
        <taxon>Enterobacterales</taxon>
        <taxon>Enterobacteriaceae</taxon>
        <taxon>Escherichia</taxon>
    </lineage>
</organism>
<proteinExistence type="evidence at protein level"/>
<name>ACKA_ECOLI</name>